<gene>
    <name type="primary">POL31</name>
    <name type="synonym">HUS2</name>
    <name type="synonym">HYS2</name>
    <name type="synonym">SDP5</name>
    <name type="ordered locus">YJR006W</name>
    <name type="ORF">J1427</name>
    <name type="ORF">YJR83.7</name>
</gene>
<proteinExistence type="evidence at protein level"/>
<evidence type="ECO:0000250" key="1"/>
<evidence type="ECO:0000269" key="2">
    <source>
    </source>
</evidence>
<evidence type="ECO:0000269" key="3">
    <source>
    </source>
</evidence>
<evidence type="ECO:0000305" key="4"/>
<evidence type="ECO:0007744" key="5">
    <source>
    </source>
</evidence>
<evidence type="ECO:0007744" key="6">
    <source>
    </source>
</evidence>
<evidence type="ECO:0007829" key="7">
    <source>
        <dbReference type="PDB" id="6P1H"/>
    </source>
</evidence>
<evidence type="ECO:0007829" key="8">
    <source>
        <dbReference type="PDB" id="6V93"/>
    </source>
</evidence>
<evidence type="ECO:0007829" key="9">
    <source>
        <dbReference type="PDB" id="7KC0"/>
    </source>
</evidence>
<evidence type="ECO:0007829" key="10">
    <source>
        <dbReference type="PDB" id="7S0T"/>
    </source>
</evidence>
<evidence type="ECO:0007829" key="11">
    <source>
        <dbReference type="PDB" id="8TLT"/>
    </source>
</evidence>
<protein>
    <recommendedName>
        <fullName>DNA polymerase delta small subunit</fullName>
        <ecNumber>2.7.7.7</ecNumber>
    </recommendedName>
    <alternativeName>
        <fullName>Hydroxyurea-sensitive protein 2</fullName>
    </alternativeName>
</protein>
<dbReference type="EC" id="2.7.7.7"/>
<dbReference type="EMBL" id="D50324">
    <property type="protein sequence ID" value="BAA08859.1"/>
    <property type="molecule type" value="Genomic_DNA"/>
</dbReference>
<dbReference type="EMBL" id="X87611">
    <property type="protein sequence ID" value="CAA60928.1"/>
    <property type="molecule type" value="Genomic_DNA"/>
</dbReference>
<dbReference type="EMBL" id="Z49506">
    <property type="protein sequence ID" value="CAA89528.1"/>
    <property type="molecule type" value="Genomic_DNA"/>
</dbReference>
<dbReference type="EMBL" id="BK006943">
    <property type="protein sequence ID" value="DAA08797.1"/>
    <property type="molecule type" value="Genomic_DNA"/>
</dbReference>
<dbReference type="PIR" id="S55194">
    <property type="entry name" value="S55194"/>
</dbReference>
<dbReference type="RefSeq" id="NP_012539.1">
    <property type="nucleotide sequence ID" value="NM_001181663.1"/>
</dbReference>
<dbReference type="PDB" id="6P1H">
    <property type="method" value="EM"/>
    <property type="resolution" value="3.20 A"/>
    <property type="chains" value="B=1-487"/>
</dbReference>
<dbReference type="PDB" id="6V8P">
    <property type="method" value="EM"/>
    <property type="resolution" value="4.10 A"/>
    <property type="chains" value="F=1-487"/>
</dbReference>
<dbReference type="PDB" id="6V93">
    <property type="method" value="EM"/>
    <property type="resolution" value="3.10 A"/>
    <property type="chains" value="F=1-487"/>
</dbReference>
<dbReference type="PDB" id="7KC0">
    <property type="method" value="EM"/>
    <property type="resolution" value="3.20 A"/>
    <property type="chains" value="B=1-487"/>
</dbReference>
<dbReference type="PDB" id="7LXD">
    <property type="method" value="EM"/>
    <property type="resolution" value="4.11 A"/>
    <property type="chains" value="F=1-487"/>
</dbReference>
<dbReference type="PDB" id="7S0T">
    <property type="method" value="EM"/>
    <property type="resolution" value="3.05 A"/>
    <property type="chains" value="F=1-487"/>
</dbReference>
<dbReference type="PDB" id="8TLQ">
    <property type="method" value="EM"/>
    <property type="resolution" value="3.53 A"/>
    <property type="chains" value="F=1-487"/>
</dbReference>
<dbReference type="PDB" id="8TLT">
    <property type="method" value="EM"/>
    <property type="resolution" value="2.85 A"/>
    <property type="chains" value="F=1-487"/>
</dbReference>
<dbReference type="PDBsum" id="6P1H"/>
<dbReference type="PDBsum" id="6V8P"/>
<dbReference type="PDBsum" id="6V93"/>
<dbReference type="PDBsum" id="7KC0"/>
<dbReference type="PDBsum" id="7LXD"/>
<dbReference type="PDBsum" id="7S0T"/>
<dbReference type="PDBsum" id="8TLQ"/>
<dbReference type="PDBsum" id="8TLT"/>
<dbReference type="EMDB" id="EMD-20235"/>
<dbReference type="EMDB" id="EMD-21108"/>
<dbReference type="EMDB" id="EMD-21115"/>
<dbReference type="EMDB" id="EMD-23570"/>
<dbReference type="EMDB" id="EMD-2409"/>
<dbReference type="SMR" id="P46957"/>
<dbReference type="BioGRID" id="33762">
    <property type="interactions" value="483"/>
</dbReference>
<dbReference type="ComplexPortal" id="CPX-1091">
    <property type="entry name" value="DNA polymerase zeta complex"/>
</dbReference>
<dbReference type="ComplexPortal" id="CPX-2101">
    <property type="entry name" value="DNA polymerase delta complex"/>
</dbReference>
<dbReference type="DIP" id="DIP-2525N"/>
<dbReference type="FunCoup" id="P46957">
    <property type="interactions" value="1068"/>
</dbReference>
<dbReference type="IntAct" id="P46957">
    <property type="interactions" value="6"/>
</dbReference>
<dbReference type="MINT" id="P46957"/>
<dbReference type="STRING" id="4932.YJR006W"/>
<dbReference type="GlyGen" id="P46957">
    <property type="glycosylation" value="1 site"/>
</dbReference>
<dbReference type="iPTMnet" id="P46957"/>
<dbReference type="PaxDb" id="4932-YJR006W"/>
<dbReference type="PeptideAtlas" id="P46957"/>
<dbReference type="EnsemblFungi" id="YJR006W_mRNA">
    <property type="protein sequence ID" value="YJR006W"/>
    <property type="gene ID" value="YJR006W"/>
</dbReference>
<dbReference type="GeneID" id="853462"/>
<dbReference type="KEGG" id="sce:YJR006W"/>
<dbReference type="AGR" id="SGD:S000003766"/>
<dbReference type="SGD" id="S000003766">
    <property type="gene designation" value="POL31"/>
</dbReference>
<dbReference type="VEuPathDB" id="FungiDB:YJR006W"/>
<dbReference type="eggNOG" id="KOG2732">
    <property type="taxonomic scope" value="Eukaryota"/>
</dbReference>
<dbReference type="GeneTree" id="ENSGT00390000006780"/>
<dbReference type="HOGENOM" id="CLU_021763_1_0_1"/>
<dbReference type="InParanoid" id="P46957"/>
<dbReference type="OMA" id="HCILIGT"/>
<dbReference type="OrthoDB" id="3763at2759"/>
<dbReference type="BioCyc" id="YEAST:G3O-31652-MONOMER"/>
<dbReference type="BRENDA" id="2.7.7.7">
    <property type="organism ID" value="984"/>
</dbReference>
<dbReference type="Reactome" id="R-SCE-69166">
    <property type="pathway name" value="Removal of the Flap Intermediate"/>
</dbReference>
<dbReference type="Reactome" id="R-SCE-69183">
    <property type="pathway name" value="Processive synthesis on the lagging strand"/>
</dbReference>
<dbReference type="BioGRID-ORCS" id="853462">
    <property type="hits" value="0 hits in 10 CRISPR screens"/>
</dbReference>
<dbReference type="PRO" id="PR:P46957"/>
<dbReference type="Proteomes" id="UP000002311">
    <property type="component" value="Chromosome X"/>
</dbReference>
<dbReference type="RNAct" id="P46957">
    <property type="molecule type" value="protein"/>
</dbReference>
<dbReference type="GO" id="GO:0005829">
    <property type="term" value="C:cytosol"/>
    <property type="evidence" value="ECO:0000314"/>
    <property type="project" value="SGD"/>
</dbReference>
<dbReference type="GO" id="GO:0043625">
    <property type="term" value="C:delta DNA polymerase complex"/>
    <property type="evidence" value="ECO:0000353"/>
    <property type="project" value="ComplexPortal"/>
</dbReference>
<dbReference type="GO" id="GO:0005634">
    <property type="term" value="C:nucleus"/>
    <property type="evidence" value="ECO:0000314"/>
    <property type="project" value="SGD"/>
</dbReference>
<dbReference type="GO" id="GO:0016035">
    <property type="term" value="C:zeta DNA polymerase complex"/>
    <property type="evidence" value="ECO:0000314"/>
    <property type="project" value="SGD"/>
</dbReference>
<dbReference type="GO" id="GO:0003677">
    <property type="term" value="F:DNA binding"/>
    <property type="evidence" value="ECO:0007669"/>
    <property type="project" value="InterPro"/>
</dbReference>
<dbReference type="GO" id="GO:0003887">
    <property type="term" value="F:DNA-directed DNA polymerase activity"/>
    <property type="evidence" value="ECO:0000314"/>
    <property type="project" value="SGD"/>
</dbReference>
<dbReference type="GO" id="GO:0006284">
    <property type="term" value="P:base-excision repair"/>
    <property type="evidence" value="ECO:0000304"/>
    <property type="project" value="SGD"/>
</dbReference>
<dbReference type="GO" id="GO:0006259">
    <property type="term" value="P:DNA metabolic process"/>
    <property type="evidence" value="ECO:0000314"/>
    <property type="project" value="ComplexPortal"/>
</dbReference>
<dbReference type="GO" id="GO:0043137">
    <property type="term" value="P:DNA replication, removal of RNA primer"/>
    <property type="evidence" value="ECO:0000314"/>
    <property type="project" value="SGD"/>
</dbReference>
<dbReference type="GO" id="GO:0006271">
    <property type="term" value="P:DNA strand elongation involved in DNA replication"/>
    <property type="evidence" value="ECO:0000318"/>
    <property type="project" value="GO_Central"/>
</dbReference>
<dbReference type="GO" id="GO:0006273">
    <property type="term" value="P:lagging strand elongation"/>
    <property type="evidence" value="ECO:0000304"/>
    <property type="project" value="SGD"/>
</dbReference>
<dbReference type="GO" id="GO:0006272">
    <property type="term" value="P:leading strand elongation"/>
    <property type="evidence" value="ECO:0000304"/>
    <property type="project" value="SGD"/>
</dbReference>
<dbReference type="GO" id="GO:0006298">
    <property type="term" value="P:mismatch repair"/>
    <property type="evidence" value="ECO:0000304"/>
    <property type="project" value="SGD"/>
</dbReference>
<dbReference type="GO" id="GO:0006289">
    <property type="term" value="P:nucleotide-excision repair"/>
    <property type="evidence" value="ECO:0000304"/>
    <property type="project" value="SGD"/>
</dbReference>
<dbReference type="GO" id="GO:0006301">
    <property type="term" value="P:postreplication repair"/>
    <property type="evidence" value="ECO:0000304"/>
    <property type="project" value="SGD"/>
</dbReference>
<dbReference type="GO" id="GO:0006278">
    <property type="term" value="P:RNA-templated DNA biosynthetic process"/>
    <property type="evidence" value="ECO:0000314"/>
    <property type="project" value="SGD"/>
</dbReference>
<dbReference type="CDD" id="cd07387">
    <property type="entry name" value="MPP_PolD2_C"/>
    <property type="match status" value="1"/>
</dbReference>
<dbReference type="FunFam" id="2.40.50.430:FF:000002">
    <property type="entry name" value="DNA polymerase delta subunit"/>
    <property type="match status" value="1"/>
</dbReference>
<dbReference type="FunFam" id="3.60.21.50:FF:000005">
    <property type="entry name" value="DNA polymerase delta subunit"/>
    <property type="match status" value="1"/>
</dbReference>
<dbReference type="Gene3D" id="2.40.50.430">
    <property type="match status" value="1"/>
</dbReference>
<dbReference type="Gene3D" id="3.60.21.50">
    <property type="match status" value="1"/>
</dbReference>
<dbReference type="InterPro" id="IPR007185">
    <property type="entry name" value="DNA_pol_a/d/e_bsu"/>
</dbReference>
<dbReference type="InterPro" id="IPR040663">
    <property type="entry name" value="DNA_pol_D_N"/>
</dbReference>
<dbReference type="InterPro" id="IPR024826">
    <property type="entry name" value="DNA_pol_delta/II_ssu"/>
</dbReference>
<dbReference type="InterPro" id="IPR041863">
    <property type="entry name" value="PolD2_C"/>
</dbReference>
<dbReference type="PANTHER" id="PTHR10416">
    <property type="entry name" value="DNA POLYMERASE DELTA SUBUNIT 2"/>
    <property type="match status" value="1"/>
</dbReference>
<dbReference type="PANTHER" id="PTHR10416:SF0">
    <property type="entry name" value="DNA POLYMERASE DELTA SUBUNIT 2"/>
    <property type="match status" value="1"/>
</dbReference>
<dbReference type="Pfam" id="PF18018">
    <property type="entry name" value="DNA_pol_D_N"/>
    <property type="match status" value="1"/>
</dbReference>
<dbReference type="Pfam" id="PF04042">
    <property type="entry name" value="DNA_pol_E_B"/>
    <property type="match status" value="1"/>
</dbReference>
<sequence>MDALLTKFNEDRSLQDENLSQPRTRVRIVDDNLYNKSNPFQLCYKKRDYGSQYYHIYQYRLKTFRERVLKECDKRWDAGFTLNGQLVLKKDKVLDIQGNQPCWCVGSIYCEMKYKPNVLDEVINDTYGAPDLTKSYTDKEGGSDEIMLEDESGRVLLVGDFIRSTPFITGVVVGILGMEAEAGTFQVLDICYPTPLPQNPFPAPIATCPTRGKIALVSGLNLNNTSPDRLLRLEILREFLMGRINNKIDDISLIGRLLICGNSVDFDIKSVNKDELMISLTEFSKFLHNILPSISVDIMPGTNDPSDKSLPQQPFHKSLFDKSLESYFNGSNKEILNLVTNPYEFSYNGVDVLAVSGKNINDICKYVIPSNDNGESENKVEEGESNDFKDDIEHRLDLMECTMKWQNIAPTAPDTLWCYPYTDKDPFVLDKWPHVYIVANQPYFGTRVVEIGGKNIKIISVPEFSSTGMIILLDLETLEAETVKIDI</sequence>
<name>DPOD2_YEAST</name>
<reference key="1">
    <citation type="journal article" date="1995" name="Nucleic Acids Res.">
        <title>HYS2, an essential gene required for DNA replication in Saccharomyces cerevisiae.</title>
        <authorList>
            <person name="Sugimoto K."/>
            <person name="Sakamoto Y."/>
            <person name="Takahashi O."/>
            <person name="Matsumoto K."/>
        </authorList>
    </citation>
    <scope>NUCLEOTIDE SEQUENCE [GENOMIC DNA]</scope>
    <scope>FUNCTION</scope>
</reference>
<reference key="2">
    <citation type="journal article" date="1996" name="EMBO J.">
        <title>Complete nucleotide sequence of Saccharomyces cerevisiae chromosome X.</title>
        <authorList>
            <person name="Galibert F."/>
            <person name="Alexandraki D."/>
            <person name="Baur A."/>
            <person name="Boles E."/>
            <person name="Chalwatzis N."/>
            <person name="Chuat J.-C."/>
            <person name="Coster F."/>
            <person name="Cziepluch C."/>
            <person name="de Haan M."/>
            <person name="Domdey H."/>
            <person name="Durand P."/>
            <person name="Entian K.-D."/>
            <person name="Gatius M."/>
            <person name="Goffeau A."/>
            <person name="Grivell L.A."/>
            <person name="Hennemann A."/>
            <person name="Herbert C.J."/>
            <person name="Heumann K."/>
            <person name="Hilger F."/>
            <person name="Hollenberg C.P."/>
            <person name="Huang M.-E."/>
            <person name="Jacq C."/>
            <person name="Jauniaux J.-C."/>
            <person name="Katsoulou C."/>
            <person name="Kirchrath L."/>
            <person name="Kleine K."/>
            <person name="Kordes E."/>
            <person name="Koetter P."/>
            <person name="Liebl S."/>
            <person name="Louis E.J."/>
            <person name="Manus V."/>
            <person name="Mewes H.-W."/>
            <person name="Miosga T."/>
            <person name="Obermaier B."/>
            <person name="Perea J."/>
            <person name="Pohl T.M."/>
            <person name="Portetelle D."/>
            <person name="Pujol A."/>
            <person name="Purnelle B."/>
            <person name="Ramezani Rad M."/>
            <person name="Rasmussen S.W."/>
            <person name="Rose M."/>
            <person name="Rossau R."/>
            <person name="Schaaff-Gerstenschlaeger I."/>
            <person name="Smits P.H.M."/>
            <person name="Scarcez T."/>
            <person name="Soriano N."/>
            <person name="To Van D."/>
            <person name="Tzermia M."/>
            <person name="Van Broekhoven A."/>
            <person name="Vandenbol M."/>
            <person name="Wedler H."/>
            <person name="von Wettstein D."/>
            <person name="Wambutt R."/>
            <person name="Zagulski M."/>
            <person name="Zollner A."/>
            <person name="Karpfinger-Hartl L."/>
        </authorList>
    </citation>
    <scope>NUCLEOTIDE SEQUENCE [LARGE SCALE GENOMIC DNA]</scope>
    <source>
        <strain>ATCC 204508 / S288c</strain>
    </source>
</reference>
<reference key="3">
    <citation type="journal article" date="2014" name="G3 (Bethesda)">
        <title>The reference genome sequence of Saccharomyces cerevisiae: Then and now.</title>
        <authorList>
            <person name="Engel S.R."/>
            <person name="Dietrich F.S."/>
            <person name="Fisk D.G."/>
            <person name="Binkley G."/>
            <person name="Balakrishnan R."/>
            <person name="Costanzo M.C."/>
            <person name="Dwight S.S."/>
            <person name="Hitz B.C."/>
            <person name="Karra K."/>
            <person name="Nash R.S."/>
            <person name="Weng S."/>
            <person name="Wong E.D."/>
            <person name="Lloyd P."/>
            <person name="Skrzypek M.S."/>
            <person name="Miyasato S.R."/>
            <person name="Simison M."/>
            <person name="Cherry J.M."/>
        </authorList>
    </citation>
    <scope>GENOME REANNOTATION</scope>
    <source>
        <strain>ATCC 204508 / S288c</strain>
    </source>
</reference>
<reference key="4">
    <citation type="journal article" date="1998" name="Nucleic Acids Res.">
        <title>The second subunit of DNA polymerase III (delta) is encoded by the HYS2 gene in Saccharomyces cerevisiae.</title>
        <authorList>
            <person name="Hashimoto K."/>
            <person name="Nakashima N."/>
            <person name="Ohara T."/>
            <person name="Maki S."/>
            <person name="Sugino A."/>
        </authorList>
    </citation>
    <scope>PARTIAL PROTEIN SEQUENCE</scope>
    <scope>CHARACTERIZATION</scope>
</reference>
<reference key="5">
    <citation type="journal article" date="1998" name="J. Biol. Chem.">
        <title>Characterization of the two small subunits of Saccharomyces cerevisiae DNA polymerase delta.</title>
        <authorList>
            <person name="Gerik K.J."/>
            <person name="Li X."/>
            <person name="Pautz A."/>
            <person name="Burgers P.M."/>
        </authorList>
    </citation>
    <scope>CHARACTERIZATION</scope>
</reference>
<reference key="6">
    <citation type="journal article" date="2001" name="J. Biol. Chem.">
        <title>Structure of DNA polymerase delta from Saccharomyces cerevisiae.</title>
        <authorList>
            <person name="Johansson E."/>
            <person name="Majka J."/>
            <person name="Burgers P.M."/>
        </authorList>
    </citation>
    <scope>COMPOSITION OF THE DNA POLYMERASE DELTA COMPLEX</scope>
</reference>
<reference key="7">
    <citation type="journal article" date="2003" name="Nature">
        <title>Global analysis of protein expression in yeast.</title>
        <authorList>
            <person name="Ghaemmaghami S."/>
            <person name="Huh W.-K."/>
            <person name="Bower K."/>
            <person name="Howson R.W."/>
            <person name="Belle A."/>
            <person name="Dephoure N."/>
            <person name="O'Shea E.K."/>
            <person name="Weissman J.S."/>
        </authorList>
    </citation>
    <scope>LEVEL OF PROTEIN EXPRESSION [LARGE SCALE ANALYSIS]</scope>
</reference>
<reference key="8">
    <citation type="journal article" date="2008" name="Mol. Cell. Proteomics">
        <title>A multidimensional chromatography technology for in-depth phosphoproteome analysis.</title>
        <authorList>
            <person name="Albuquerque C.P."/>
            <person name="Smolka M.B."/>
            <person name="Payne S.H."/>
            <person name="Bafna V."/>
            <person name="Eng J."/>
            <person name="Zhou H."/>
        </authorList>
    </citation>
    <scope>PHOSPHORYLATION [LARGE SCALE ANALYSIS] AT SER-20</scope>
    <scope>IDENTIFICATION BY MASS SPECTROMETRY [LARGE SCALE ANALYSIS]</scope>
</reference>
<reference key="9">
    <citation type="journal article" date="2012" name="Proc. Natl. Acad. Sci. U.S.A.">
        <title>N-terminal acetylome analyses and functional insights of the N-terminal acetyltransferase NatB.</title>
        <authorList>
            <person name="Van Damme P."/>
            <person name="Lasa M."/>
            <person name="Polevoda B."/>
            <person name="Gazquez C."/>
            <person name="Elosegui-Artola A."/>
            <person name="Kim D.S."/>
            <person name="De Juan-Pardo E."/>
            <person name="Demeyer K."/>
            <person name="Hole K."/>
            <person name="Larrea E."/>
            <person name="Timmerman E."/>
            <person name="Prieto J."/>
            <person name="Arnesen T."/>
            <person name="Sherman F."/>
            <person name="Gevaert K."/>
            <person name="Aldabe R."/>
        </authorList>
    </citation>
    <scope>ACETYLATION [LARGE SCALE ANALYSIS] AT MET-1</scope>
    <scope>IDENTIFICATION BY MASS SPECTROMETRY [LARGE SCALE ANALYSIS]</scope>
</reference>
<keyword id="KW-0002">3D-structure</keyword>
<keyword id="KW-0007">Acetylation</keyword>
<keyword id="KW-0903">Direct protein sequencing</keyword>
<keyword id="KW-0235">DNA replication</keyword>
<keyword id="KW-0239">DNA-directed DNA polymerase</keyword>
<keyword id="KW-0548">Nucleotidyltransferase</keyword>
<keyword id="KW-0539">Nucleus</keyword>
<keyword id="KW-0597">Phosphoprotein</keyword>
<keyword id="KW-1185">Reference proteome</keyword>
<keyword id="KW-0808">Transferase</keyword>
<comment type="function">
    <text evidence="3">DNA polymerase delta (DNA polymerase III) participates in chromosomal DNA replication. It is required during synthesis of the leading and lagging DNA strands at the replication fork and binds at/or near replication origins and moves along DNA with the replication fork. It has 3'-5' proofreading exonuclease activity that correct errors arising during DNA replication. It is also involved in DNA synthesis during DNA repair.</text>
</comment>
<comment type="catalytic activity">
    <reaction>
        <text>DNA(n) + a 2'-deoxyribonucleoside 5'-triphosphate = DNA(n+1) + diphosphate</text>
        <dbReference type="Rhea" id="RHEA:22508"/>
        <dbReference type="Rhea" id="RHEA-COMP:17339"/>
        <dbReference type="Rhea" id="RHEA-COMP:17340"/>
        <dbReference type="ChEBI" id="CHEBI:33019"/>
        <dbReference type="ChEBI" id="CHEBI:61560"/>
        <dbReference type="ChEBI" id="CHEBI:173112"/>
        <dbReference type="EC" id="2.7.7.7"/>
    </reaction>
</comment>
<comment type="subunit">
    <text>DNA polymerase delta is a heterotrimer of POL3, POL32 and HYS2.</text>
</comment>
<comment type="interaction">
    <interactant intactId="EBI-6080">
        <id>P46957</id>
    </interactant>
    <interactant intactId="EBI-6134">
        <id>P15436</id>
        <label>POL3</label>
    </interactant>
    <organismsDiffer>false</organismsDiffer>
    <experiments>7</experiments>
</comment>
<comment type="subcellular location">
    <subcellularLocation>
        <location evidence="1">Nucleus</location>
    </subcellularLocation>
</comment>
<comment type="miscellaneous">
    <text evidence="2">Present with 626 molecules/cell in log phase SD medium.</text>
</comment>
<comment type="similarity">
    <text evidence="4">Belongs to the DNA polymerase delta/II small subunit family.</text>
</comment>
<feature type="chain" id="PRO_0000096174" description="DNA polymerase delta small subunit">
    <location>
        <begin position="1"/>
        <end position="487"/>
    </location>
</feature>
<feature type="modified residue" description="N-acetylmethionine" evidence="6">
    <location>
        <position position="1"/>
    </location>
</feature>
<feature type="modified residue" description="Phosphoserine" evidence="5">
    <location>
        <position position="20"/>
    </location>
</feature>
<feature type="sequence conflict" description="In Ref. 1; BAA08859." evidence="4" ref="1">
    <original>L</original>
    <variation>H</variation>
    <location>
        <position position="156"/>
    </location>
</feature>
<feature type="sequence conflict" description="In Ref. 1; BAA08859." evidence="4" ref="1">
    <original>S</original>
    <variation>N</variation>
    <location>
        <position position="465"/>
    </location>
</feature>
<feature type="helix" evidence="11">
    <location>
        <begin position="1"/>
        <end position="8"/>
    </location>
</feature>
<feature type="turn" evidence="11">
    <location>
        <begin position="9"/>
        <end position="11"/>
    </location>
</feature>
<feature type="strand" evidence="10">
    <location>
        <begin position="19"/>
        <end position="21"/>
    </location>
</feature>
<feature type="turn" evidence="11">
    <location>
        <begin position="31"/>
        <end position="35"/>
    </location>
</feature>
<feature type="turn" evidence="11">
    <location>
        <begin position="44"/>
        <end position="46"/>
    </location>
</feature>
<feature type="helix" evidence="11">
    <location>
        <begin position="53"/>
        <end position="75"/>
    </location>
</feature>
<feature type="strand" evidence="11">
    <location>
        <begin position="83"/>
        <end position="86"/>
    </location>
</feature>
<feature type="helix" evidence="11">
    <location>
        <begin position="93"/>
        <end position="95"/>
    </location>
</feature>
<feature type="strand" evidence="10">
    <location>
        <begin position="98"/>
        <end position="100"/>
    </location>
</feature>
<feature type="strand" evidence="11">
    <location>
        <begin position="102"/>
        <end position="109"/>
    </location>
</feature>
<feature type="strand" evidence="7">
    <location>
        <begin position="113"/>
        <end position="115"/>
    </location>
</feature>
<feature type="helix" evidence="11">
    <location>
        <begin position="116"/>
        <end position="123"/>
    </location>
</feature>
<feature type="turn" evidence="11">
    <location>
        <begin position="124"/>
        <end position="126"/>
    </location>
</feature>
<feature type="helix" evidence="11">
    <location>
        <begin position="132"/>
        <end position="136"/>
    </location>
</feature>
<feature type="turn" evidence="7">
    <location>
        <begin position="139"/>
        <end position="141"/>
    </location>
</feature>
<feature type="strand" evidence="11">
    <location>
        <begin position="146"/>
        <end position="149"/>
    </location>
</feature>
<feature type="strand" evidence="11">
    <location>
        <begin position="154"/>
        <end position="159"/>
    </location>
</feature>
<feature type="helix" evidence="11">
    <location>
        <begin position="162"/>
        <end position="164"/>
    </location>
</feature>
<feature type="strand" evidence="11">
    <location>
        <begin position="173"/>
        <end position="177"/>
    </location>
</feature>
<feature type="strand" evidence="11">
    <location>
        <begin position="181"/>
        <end position="186"/>
    </location>
</feature>
<feature type="strand" evidence="11">
    <location>
        <begin position="188"/>
        <end position="191"/>
    </location>
</feature>
<feature type="strand" evidence="9">
    <location>
        <begin position="207"/>
        <end position="209"/>
    </location>
</feature>
<feature type="strand" evidence="11">
    <location>
        <begin position="213"/>
        <end position="217"/>
    </location>
</feature>
<feature type="helix" evidence="11">
    <location>
        <begin position="227"/>
        <end position="240"/>
    </location>
</feature>
<feature type="turn" evidence="11">
    <location>
        <begin position="241"/>
        <end position="245"/>
    </location>
</feature>
<feature type="helix" evidence="11">
    <location>
        <begin position="248"/>
        <end position="251"/>
    </location>
</feature>
<feature type="strand" evidence="11">
    <location>
        <begin position="254"/>
        <end position="259"/>
    </location>
</feature>
<feature type="helix" evidence="11">
    <location>
        <begin position="268"/>
        <end position="270"/>
    </location>
</feature>
<feature type="helix" evidence="11">
    <location>
        <begin position="273"/>
        <end position="290"/>
    </location>
</feature>
<feature type="turn" evidence="11">
    <location>
        <begin position="291"/>
        <end position="293"/>
    </location>
</feature>
<feature type="strand" evidence="11">
    <location>
        <begin position="294"/>
        <end position="298"/>
    </location>
</feature>
<feature type="strand" evidence="11">
    <location>
        <begin position="302"/>
        <end position="306"/>
    </location>
</feature>
<feature type="strand" evidence="11">
    <location>
        <begin position="308"/>
        <end position="311"/>
    </location>
</feature>
<feature type="strand" evidence="11">
    <location>
        <begin position="317"/>
        <end position="320"/>
    </location>
</feature>
<feature type="helix" evidence="11">
    <location>
        <begin position="322"/>
        <end position="324"/>
    </location>
</feature>
<feature type="turn" evidence="11">
    <location>
        <begin position="325"/>
        <end position="328"/>
    </location>
</feature>
<feature type="strand" evidence="11">
    <location>
        <begin position="329"/>
        <end position="331"/>
    </location>
</feature>
<feature type="turn" evidence="11">
    <location>
        <begin position="333"/>
        <end position="335"/>
    </location>
</feature>
<feature type="strand" evidence="11">
    <location>
        <begin position="336"/>
        <end position="338"/>
    </location>
</feature>
<feature type="strand" evidence="11">
    <location>
        <begin position="341"/>
        <end position="347"/>
    </location>
</feature>
<feature type="strand" evidence="11">
    <location>
        <begin position="350"/>
        <end position="355"/>
    </location>
</feature>
<feature type="helix" evidence="11">
    <location>
        <begin position="358"/>
        <end position="363"/>
    </location>
</feature>
<feature type="strand" evidence="7">
    <location>
        <begin position="385"/>
        <end position="387"/>
    </location>
</feature>
<feature type="helix" evidence="11">
    <location>
        <begin position="392"/>
        <end position="404"/>
    </location>
</feature>
<feature type="strand" evidence="7">
    <location>
        <begin position="405"/>
        <end position="408"/>
    </location>
</feature>
<feature type="helix" evidence="11">
    <location>
        <begin position="412"/>
        <end position="415"/>
    </location>
</feature>
<feature type="strand" evidence="8">
    <location>
        <begin position="422"/>
        <end position="424"/>
    </location>
</feature>
<feature type="strand" evidence="8">
    <location>
        <begin position="426"/>
        <end position="428"/>
    </location>
</feature>
<feature type="strand" evidence="11">
    <location>
        <begin position="430"/>
        <end position="432"/>
    </location>
</feature>
<feature type="strand" evidence="11">
    <location>
        <begin position="434"/>
        <end position="443"/>
    </location>
</feature>
<feature type="strand" evidence="11">
    <location>
        <begin position="445"/>
        <end position="451"/>
    </location>
</feature>
<feature type="strand" evidence="11">
    <location>
        <begin position="454"/>
        <end position="462"/>
    </location>
</feature>
<feature type="strand" evidence="11">
    <location>
        <begin position="464"/>
        <end position="467"/>
    </location>
</feature>
<feature type="strand" evidence="11">
    <location>
        <begin position="469"/>
        <end position="474"/>
    </location>
</feature>
<feature type="turn" evidence="11">
    <location>
        <begin position="475"/>
        <end position="477"/>
    </location>
</feature>
<feature type="strand" evidence="11">
    <location>
        <begin position="480"/>
        <end position="486"/>
    </location>
</feature>
<organism>
    <name type="scientific">Saccharomyces cerevisiae (strain ATCC 204508 / S288c)</name>
    <name type="common">Baker's yeast</name>
    <dbReference type="NCBI Taxonomy" id="559292"/>
    <lineage>
        <taxon>Eukaryota</taxon>
        <taxon>Fungi</taxon>
        <taxon>Dikarya</taxon>
        <taxon>Ascomycota</taxon>
        <taxon>Saccharomycotina</taxon>
        <taxon>Saccharomycetes</taxon>
        <taxon>Saccharomycetales</taxon>
        <taxon>Saccharomycetaceae</taxon>
        <taxon>Saccharomyces</taxon>
    </lineage>
</organism>
<accession>P46957</accession>
<accession>D6VWI1</accession>